<keyword id="KW-0903">Direct protein sequencing</keyword>
<keyword id="KW-0272">Extracellular matrix</keyword>
<keyword id="KW-0325">Glycoprotein</keyword>
<keyword id="KW-0379">Hydroxylation</keyword>
<keyword id="KW-0597">Phosphoprotein</keyword>
<keyword id="KW-0964">Secreted</keyword>
<dbReference type="GO" id="GO:0005576">
    <property type="term" value="C:extracellular region"/>
    <property type="evidence" value="ECO:0007669"/>
    <property type="project" value="UniProtKB-SubCell"/>
</dbReference>
<dbReference type="InterPro" id="IPR008160">
    <property type="entry name" value="Collagen"/>
</dbReference>
<dbReference type="InterPro" id="IPR050938">
    <property type="entry name" value="Collagen_Structural_Proteins"/>
</dbReference>
<dbReference type="PANTHER" id="PTHR37456:SF6">
    <property type="entry name" value="COLLAGEN ALPHA-1(XXIII) CHAIN-LIKE ISOFORM X2"/>
    <property type="match status" value="1"/>
</dbReference>
<dbReference type="PANTHER" id="PTHR37456">
    <property type="entry name" value="SI:CH211-266K2.1"/>
    <property type="match status" value="1"/>
</dbReference>
<dbReference type="Pfam" id="PF01391">
    <property type="entry name" value="Collagen"/>
    <property type="match status" value="14"/>
</dbReference>
<accession>C0HLG7</accession>
<reference evidence="8" key="1">
    <citation type="journal article" date="2019" name="Nat. Ecol. Evol.">
        <title>Palaeoproteomics resolves sloth relationships.</title>
        <authorList>
            <person name="Presslee S."/>
            <person name="Slater G.J."/>
            <person name="Pujos F."/>
            <person name="Forasiepi A.M."/>
            <person name="Fischer R."/>
            <person name="Molloy K."/>
            <person name="Mackie M."/>
            <person name="Olsen J.V."/>
            <person name="Kramarz A."/>
            <person name="Taglioretti M."/>
            <person name="Scaglia F."/>
            <person name="Lezcano M."/>
            <person name="Lanata J.L."/>
            <person name="Southon J."/>
            <person name="Feranec R."/>
            <person name="Bloch J."/>
            <person name="Hajduk A."/>
            <person name="Martin F.M."/>
            <person name="Salas Gismondi R."/>
            <person name="Reguero M."/>
            <person name="de Muizon C."/>
            <person name="Greenwood A."/>
            <person name="Chait B.T."/>
            <person name="Penkman K."/>
            <person name="Collins M."/>
            <person name="MacPhee R.D.E."/>
        </authorList>
    </citation>
    <scope>PROTEIN SEQUENCE</scope>
    <scope>TISSUE SPECIFICITY</scope>
    <scope>IDENTIFICATION BY MASS SPECTROMETRY</scope>
    <source>
        <tissue evidence="7">Bone</tissue>
    </source>
</reference>
<proteinExistence type="evidence at protein level"/>
<name>CO1A1_CHOHO</name>
<sequence length="999" mass="88919">SYGYDEKSAGGISVPGPMGPSGPRGLPGPPGAPGPQGFQGPPGEPGEPGSGPMGPRGPPGPPGKNGDDGEAGKPGRPGERGPPGPQGARGLPGTAGLPGMKGHRGFSGLDGAKGDAGPAGPKGEPGSPGENGAPGQMGPRGLPGERGRPGASGPAGARGNDGATGAAGPPGPTGPAGPPGFPGAVGAKGEAGPQGARGSEGPQGVRGEPGPPGPAGAAGPAGNPGADGQPGAKGANGAPGIAGAPGFPGARGPSGPQGPSGPPGPKGNSGEPGAPGSKGDTGAKGEPGPTGIQGPPGPAGEEGKRGARGEPGPTGLPGPPGERGGPGSRGFPGADGVAGPKGPAGERGSPGPAGPKGSPGEAGRPGEAGLPGAKGLTGSPGSPGPDGKTGPPGPAGQDGRPGPPGPPGARGQAGVMGFPGPKGAERGVPGPPGAVGPAGKDGEAGAQGPPGPAGPAGERGEQGPAGSPGFQGLPGPAGPPGEAGKPGEQGVPGDLGAPGPSGARGVQGPPGPAGPRGGDAGAPGAPGSQGAPGLQGMPGERGAAGLPGPKGDRGDAGPKGADGAPGKDGVRGLTGPIGPPGPAGAPGDKGESGPSGPAGPTGARGAPGDRGEPGPPGPAGFAGPPGADGQPGAKGEPGDAGAKGDAGPPGPAGPTGPPGPIGNVGAPGPKGARGSAGPPGATGFPGAAGRVGPPGPSGNAGPPGPPGPVGKEGGKGPRGETGPAGRPGEVGPPGPPGPSGEKGSPGADGPAGAPGTPGPQGISGQRGVVGLPGQRGERGFPGLPGPSGEPGKQGPSGSSGERGPPGPVGPPGLAGPPGESGREGSPGAEGSPGRDGSPGPKGDRGETGPGPPGAPGAPGAPGPVGPAGKNGDRGETGPAGPAGPAGPAGARGPAGPQGPRGDKGETGEQGDRGIKGHRGFSGLQGPAGPPGSPGEQGPSGASGPAGPRGPPGSAGSPGKDGLNGLPGPIGPPGPRGRTGDAGPVGPPGPPGPPGPPGPP</sequence>
<evidence type="ECO:0000250" key="1">
    <source>
        <dbReference type="UniProtKB" id="P02452"/>
    </source>
</evidence>
<evidence type="ECO:0000250" key="2">
    <source>
        <dbReference type="UniProtKB" id="P02454"/>
    </source>
</evidence>
<evidence type="ECO:0000250" key="3">
    <source>
        <dbReference type="UniProtKB" id="P02457"/>
    </source>
</evidence>
<evidence type="ECO:0000250" key="4">
    <source>
        <dbReference type="UniProtKB" id="P11087"/>
    </source>
</evidence>
<evidence type="ECO:0000256" key="5">
    <source>
        <dbReference type="SAM" id="MobiDB-lite"/>
    </source>
</evidence>
<evidence type="ECO:0000269" key="6">
    <source>
    </source>
</evidence>
<evidence type="ECO:0000303" key="7">
    <source>
    </source>
</evidence>
<evidence type="ECO:0000305" key="8"/>
<organism evidence="7">
    <name type="scientific">Choloepus hoffmanni</name>
    <name type="common">Hoffmann's two-fingered sloth</name>
    <dbReference type="NCBI Taxonomy" id="9358"/>
    <lineage>
        <taxon>Eukaryota</taxon>
        <taxon>Metazoa</taxon>
        <taxon>Chordata</taxon>
        <taxon>Craniata</taxon>
        <taxon>Vertebrata</taxon>
        <taxon>Euteleostomi</taxon>
        <taxon>Mammalia</taxon>
        <taxon>Eutheria</taxon>
        <taxon>Xenarthra</taxon>
        <taxon>Pilosa</taxon>
        <taxon>Folivora</taxon>
        <taxon>Megalonychidae</taxon>
        <taxon>Choloepus</taxon>
    </lineage>
</organism>
<protein>
    <recommendedName>
        <fullName evidence="7">Collagen alpha-1(I) chain</fullName>
    </recommendedName>
    <alternativeName>
        <fullName evidence="1">Alpha-1 type I collagen</fullName>
    </alternativeName>
</protein>
<comment type="function">
    <text evidence="8">Type I collagen is a member of group I collagen (fibrillar forming collagen).</text>
</comment>
<comment type="subunit">
    <text evidence="8">Trimers of one alpha 2(I) and two alpha 1(I) chains.</text>
</comment>
<comment type="subcellular location">
    <subcellularLocation>
        <location>Secreted</location>
    </subcellularLocation>
    <subcellularLocation>
        <location>Secreted</location>
        <location>Extracellular space</location>
    </subcellularLocation>
    <subcellularLocation>
        <location evidence="8">Secreted</location>
        <location evidence="8">Extracellular space</location>
        <location evidence="8">Extracellular matrix</location>
    </subcellularLocation>
</comment>
<comment type="tissue specificity">
    <text evidence="6">Expressed in bones.</text>
</comment>
<comment type="PTM">
    <text evidence="1">Contains mostly 4-hydroxyproline. Proline residues at the third position of the tripeptide repeating unit (G-X-Y) are hydroxylated in some or all of the chains.</text>
</comment>
<comment type="PTM">
    <text evidence="4">Contains 3-hydroxyproline at a few sites. This modification occurs on the first proline residue in the sequence motif Gly-Pro-Hyp, where Hyp is 4-hydroxyproline.</text>
</comment>
<comment type="PTM">
    <text evidence="1">Lysine residues at the third position of the tripeptide repeating unit (G-X-Y) are 5-hydroxylated in some or all of the chains.</text>
</comment>
<comment type="PTM">
    <text evidence="1">O-glycosylated on hydroxylated lysine residues. The O-linked glycan consists of a Glc-Gal disaccharide.</text>
</comment>
<comment type="similarity">
    <text evidence="8">Belongs to the fibrillar collagen family.</text>
</comment>
<feature type="chain" id="PRO_0000448478" description="Collagen alpha-1(I) chain">
    <location>
        <begin position="1"/>
        <end position="999"/>
    </location>
</feature>
<feature type="region of interest" description="Disordered" evidence="5">
    <location>
        <begin position="1"/>
        <end position="999"/>
    </location>
</feature>
<feature type="compositionally biased region" description="Basic and acidic residues" evidence="5">
    <location>
        <begin position="65"/>
        <end position="79"/>
    </location>
</feature>
<feature type="compositionally biased region" description="Low complexity" evidence="5">
    <location>
        <begin position="115"/>
        <end position="131"/>
    </location>
</feature>
<feature type="compositionally biased region" description="Low complexity" evidence="5">
    <location>
        <begin position="149"/>
        <end position="167"/>
    </location>
</feature>
<feature type="compositionally biased region" description="Pro residues" evidence="5">
    <location>
        <begin position="169"/>
        <end position="181"/>
    </location>
</feature>
<feature type="compositionally biased region" description="Low complexity" evidence="5">
    <location>
        <begin position="215"/>
        <end position="254"/>
    </location>
</feature>
<feature type="compositionally biased region" description="Gly residues" evidence="5">
    <location>
        <begin position="321"/>
        <end position="330"/>
    </location>
</feature>
<feature type="compositionally biased region" description="Low complexity" evidence="5">
    <location>
        <begin position="374"/>
        <end position="400"/>
    </location>
</feature>
<feature type="compositionally biased region" description="Low complexity" evidence="5">
    <location>
        <begin position="462"/>
        <end position="489"/>
    </location>
</feature>
<feature type="compositionally biased region" description="Low complexity" evidence="5">
    <location>
        <begin position="522"/>
        <end position="535"/>
    </location>
</feature>
<feature type="compositionally biased region" description="Low complexity" evidence="5">
    <location>
        <begin position="592"/>
        <end position="606"/>
    </location>
</feature>
<feature type="compositionally biased region" description="Low complexity" evidence="5">
    <location>
        <begin position="619"/>
        <end position="646"/>
    </location>
</feature>
<feature type="compositionally biased region" description="Pro residues" evidence="5">
    <location>
        <begin position="648"/>
        <end position="660"/>
    </location>
</feature>
<feature type="compositionally biased region" description="Low complexity" evidence="5">
    <location>
        <begin position="675"/>
        <end position="691"/>
    </location>
</feature>
<feature type="compositionally biased region" description="Low complexity" evidence="5">
    <location>
        <begin position="720"/>
        <end position="729"/>
    </location>
</feature>
<feature type="compositionally biased region" description="Low complexity" evidence="5">
    <location>
        <begin position="739"/>
        <end position="754"/>
    </location>
</feature>
<feature type="compositionally biased region" description="Pro residues" evidence="5">
    <location>
        <begin position="804"/>
        <end position="814"/>
    </location>
</feature>
<feature type="compositionally biased region" description="Low complexity" evidence="5">
    <location>
        <begin position="816"/>
        <end position="831"/>
    </location>
</feature>
<feature type="compositionally biased region" description="Pro residues" evidence="5">
    <location>
        <begin position="849"/>
        <end position="864"/>
    </location>
</feature>
<feature type="compositionally biased region" description="Low complexity" evidence="5">
    <location>
        <begin position="885"/>
        <end position="899"/>
    </location>
</feature>
<feature type="compositionally biased region" description="Basic and acidic residues" evidence="5">
    <location>
        <begin position="900"/>
        <end position="914"/>
    </location>
</feature>
<feature type="compositionally biased region" description="Low complexity" evidence="5">
    <location>
        <begin position="933"/>
        <end position="966"/>
    </location>
</feature>
<feature type="compositionally biased region" description="Pro residues" evidence="5">
    <location>
        <begin position="984"/>
        <end position="999"/>
    </location>
</feature>
<feature type="modified residue" description="Allysine" evidence="1">
    <location>
        <position position="7"/>
    </location>
</feature>
<feature type="modified residue" description="Phosphoserine" evidence="2">
    <location>
        <position position="8"/>
    </location>
</feature>
<feature type="modified residue" description="4-hydroxyproline" evidence="3">
    <location>
        <position position="27"/>
    </location>
</feature>
<feature type="modified residue" description="4-hydroxyproline" evidence="3">
    <location>
        <position position="30"/>
    </location>
</feature>
<feature type="modified residue" description="4-hydroxyproline" evidence="3">
    <location>
        <position position="33"/>
    </location>
</feature>
<feature type="modified residue" description="4-hydroxyproline" evidence="3">
    <location>
        <position position="42"/>
    </location>
</feature>
<feature type="modified residue" description="4-hydroxyproline" evidence="3">
    <location>
        <position position="45"/>
    </location>
</feature>
<feature type="modified residue" description="4-hydroxyproline" evidence="3">
    <location>
        <position position="48"/>
    </location>
</feature>
<feature type="modified residue" description="4-hydroxyproline" evidence="3">
    <location>
        <position position="62"/>
    </location>
</feature>
<feature type="modified residue" description="4-hydroxyproline" evidence="3">
    <location>
        <position position="77"/>
    </location>
</feature>
<feature type="modified residue" description="4-hydroxyproline" evidence="3">
    <location>
        <position position="83"/>
    </location>
</feature>
<feature type="modified residue" description="4-hydroxyproline" evidence="3">
    <location>
        <position position="92"/>
    </location>
</feature>
<feature type="modified residue" description="4-hydroxyproline" evidence="3">
    <location>
        <position position="98"/>
    </location>
</feature>
<feature type="modified residue" description="5-hydroxylysine; alternate" evidence="1">
    <location>
        <position position="101"/>
    </location>
</feature>
<feature type="modified residue" description="Phosphoserine" evidence="2">
    <location>
        <position position="107"/>
    </location>
</feature>
<feature type="modified residue" description="4-hydroxyproline" evidence="3">
    <location>
        <position position="125"/>
    </location>
</feature>
<feature type="modified residue" description="4-hydroxyproline" evidence="3">
    <location>
        <position position="128"/>
    </location>
</feature>
<feature type="modified residue" description="4-hydroxyproline" evidence="3">
    <location>
        <position position="134"/>
    </location>
</feature>
<feature type="modified residue" description="4-hydroxyproline" evidence="3">
    <location>
        <position position="143"/>
    </location>
</feature>
<feature type="modified residue" description="4-hydroxyproline" evidence="3">
    <location>
        <position position="149"/>
    </location>
</feature>
<feature type="modified residue" description="4-hydroxyproline" evidence="3">
    <location>
        <position position="170"/>
    </location>
</feature>
<feature type="modified residue" description="4-hydroxyproline" evidence="3">
    <location>
        <position position="179"/>
    </location>
</feature>
<feature type="modified residue" description="4-hydroxyproline" evidence="3">
    <location>
        <position position="182"/>
    </location>
</feature>
<feature type="modified residue" description="4-hydroxyproline" evidence="3">
    <location>
        <position position="209"/>
    </location>
</feature>
<feature type="modified residue" description="4-hydroxyproline" evidence="3">
    <location>
        <position position="212"/>
    </location>
</feature>
<feature type="modified residue" description="4-hydroxyproline" evidence="3">
    <location>
        <position position="224"/>
    </location>
</feature>
<feature type="modified residue" description="4-hydroxyproline" evidence="3">
    <location>
        <position position="230"/>
    </location>
</feature>
<feature type="modified residue" description="4-hydroxyproline" evidence="3">
    <location>
        <position position="239"/>
    </location>
</feature>
<feature type="modified residue" description="4-hydroxyproline" evidence="3">
    <location>
        <position position="245"/>
    </location>
</feature>
<feature type="modified residue" description="4-hydroxyproline" evidence="3">
    <location>
        <position position="248"/>
    </location>
</feature>
<feature type="modified residue" description="4-hydroxyproline" evidence="3">
    <location>
        <position position="263"/>
    </location>
</feature>
<feature type="modified residue" description="5-hydroxylysine" evidence="3">
    <location>
        <position position="266"/>
    </location>
</feature>
<feature type="modified residue" description="4-hydroxyproline" evidence="3">
    <location>
        <position position="272"/>
    </location>
</feature>
<feature type="modified residue" description="4-hydroxyproline" evidence="3">
    <location>
        <position position="275"/>
    </location>
</feature>
<feature type="modified residue" description="4-hydroxyproline" evidence="3">
    <location>
        <position position="287"/>
    </location>
</feature>
<feature type="modified residue" description="4-hydroxyproline" evidence="3">
    <location>
        <position position="296"/>
    </location>
</feature>
<feature type="modified residue" description="4-hydroxyproline" evidence="3">
    <location>
        <position position="311"/>
    </location>
</feature>
<feature type="modified residue" description="4-hydroxyproline" evidence="3">
    <location>
        <position position="317"/>
    </location>
</feature>
<feature type="modified residue" description="4-hydroxyproline" evidence="3">
    <location>
        <position position="326"/>
    </location>
</feature>
<feature type="modified residue" description="4-hydroxyproline" evidence="3">
    <location>
        <position position="332"/>
    </location>
</feature>
<feature type="modified residue" description="5-hydroxylysine" evidence="3">
    <location>
        <position position="341"/>
    </location>
</feature>
<feature type="modified residue" description="4-hydroxyproline" evidence="3">
    <location>
        <position position="350"/>
    </location>
</feature>
<feature type="modified residue" description="4-hydroxyproline" evidence="3">
    <location>
        <position position="359"/>
    </location>
</feature>
<feature type="modified residue" description="4-hydroxyproline" evidence="3">
    <location>
        <position position="365"/>
    </location>
</feature>
<feature type="modified residue" description="4-hydroxyproline" evidence="3">
    <location>
        <position position="371"/>
    </location>
</feature>
<feature type="modified residue" description="4-hydroxyproline" evidence="3">
    <location>
        <position position="380"/>
    </location>
</feature>
<feature type="modified residue" description="4-hydroxyproline" evidence="3">
    <location>
        <position position="383"/>
    </location>
</feature>
<feature type="modified residue" description="4-hydroxyproline" evidence="3">
    <location>
        <position position="392"/>
    </location>
</feature>
<feature type="modified residue" description="4-hydroxyproline" evidence="3">
    <location>
        <position position="401"/>
    </location>
</feature>
<feature type="modified residue" description="4-hydroxyproline" evidence="3">
    <location>
        <position position="407"/>
    </location>
</feature>
<feature type="modified residue" description="4-hydroxyproline" evidence="3">
    <location>
        <position position="419"/>
    </location>
</feature>
<feature type="modified residue" description="4-hydroxyproline" evidence="3">
    <location>
        <position position="429"/>
    </location>
</feature>
<feature type="modified residue" description="4-hydroxyproline" evidence="3">
    <location>
        <position position="432"/>
    </location>
</feature>
<feature type="modified residue" description="4-hydroxyproline" evidence="3">
    <location>
        <position position="450"/>
    </location>
</feature>
<feature type="modified residue" description="4-hydroxyproline" evidence="3">
    <location>
        <position position="468"/>
    </location>
</feature>
<feature type="modified residue" description="4-hydroxyproline" evidence="3">
    <location>
        <position position="474"/>
    </location>
</feature>
<feature type="modified residue" description="4-hydroxyproline" evidence="3">
    <location>
        <position position="480"/>
    </location>
</feature>
<feature type="modified residue" description="4-hydroxyproline" evidence="3">
    <location>
        <position position="486"/>
    </location>
</feature>
<feature type="modified residue" description="4-hydroxyproline" evidence="3">
    <location>
        <position position="492"/>
    </location>
</feature>
<feature type="modified residue" description="4-hydroxyproline" evidence="3">
    <location>
        <position position="498"/>
    </location>
</feature>
<feature type="modified residue" description="4-hydroxyproline" evidence="3">
    <location>
        <position position="510"/>
    </location>
</feature>
<feature type="modified residue" description="4-hydroxyproline" evidence="3">
    <location>
        <position position="526"/>
    </location>
</feature>
<feature type="modified residue" description="4-hydroxyproline" evidence="3">
    <location>
        <position position="532"/>
    </location>
</feature>
<feature type="modified residue" description="4-hydroxyproline" evidence="3">
    <location>
        <position position="538"/>
    </location>
</feature>
<feature type="modified residue" description="4-hydroxyproline" evidence="3">
    <location>
        <position position="547"/>
    </location>
</feature>
<feature type="modified residue" description="5-hydroxylysine" evidence="3">
    <location>
        <position position="559"/>
    </location>
</feature>
<feature type="modified residue" description="4-hydroxyproline" evidence="3">
    <location>
        <position position="565"/>
    </location>
</feature>
<feature type="modified residue" description="4-hydroxyproline" evidence="3">
    <location>
        <position position="580"/>
    </location>
</feature>
<feature type="modified residue" description="4-hydroxyproline" evidence="3">
    <location>
        <position position="586"/>
    </location>
</feature>
<feature type="modified residue" description="Phosphoserine" evidence="2">
    <location>
        <position position="595"/>
    </location>
</feature>
<feature type="modified residue" description="4-hydroxyproline" evidence="3">
    <location>
        <position position="607"/>
    </location>
</feature>
<feature type="modified residue" description="4-hydroxyproline" evidence="3">
    <location>
        <position position="613"/>
    </location>
</feature>
<feature type="modified residue" description="4-hydroxyproline" evidence="3">
    <location>
        <position position="616"/>
    </location>
</feature>
<feature type="modified residue" description="4-hydroxyproline" evidence="3">
    <location>
        <position position="625"/>
    </location>
</feature>
<feature type="modified residue" description="4-hydroxyproline" evidence="3">
    <location>
        <position position="631"/>
    </location>
</feature>
<feature type="modified residue" description="4-hydroxyproline" evidence="3">
    <location>
        <position position="649"/>
    </location>
</feature>
<feature type="modified residue" description="4-hydroxyproline" evidence="3">
    <location>
        <position position="658"/>
    </location>
</feature>
<feature type="modified residue" description="4-hydroxyproline" evidence="3">
    <location>
        <position position="667"/>
    </location>
</feature>
<feature type="modified residue" description="5-hydroxylysine" evidence="3">
    <location>
        <position position="670"/>
    </location>
</feature>
<feature type="modified residue" description="4-hydroxyproline" evidence="3">
    <location>
        <position position="679"/>
    </location>
</feature>
<feature type="modified residue" description="4-hydroxyproline" evidence="3">
    <location>
        <position position="685"/>
    </location>
</feature>
<feature type="modified residue" description="3-hydroxyproline" evidence="4">
    <location>
        <position position="693"/>
    </location>
</feature>
<feature type="modified residue" description="4-hydroxyproline" evidence="4">
    <location>
        <position position="694"/>
    </location>
</feature>
<feature type="modified residue" description="4-hydroxyproline" evidence="4">
    <location>
        <position position="703"/>
    </location>
</feature>
<feature type="modified residue" description="4-hydroxyproline" evidence="4">
    <location>
        <position position="706"/>
    </location>
</feature>
<feature type="modified residue" description="4-hydroxyproline" evidence="3">
    <location>
        <position position="727"/>
    </location>
</feature>
<feature type="modified residue" description="4-hydroxyproline" evidence="3">
    <location>
        <position position="736"/>
    </location>
</feature>
<feature type="modified residue" description="4-hydroxyproline" evidence="3">
    <location>
        <position position="745"/>
    </location>
</feature>
<feature type="modified residue" description="4-hydroxyproline" evidence="3">
    <location>
        <position position="754"/>
    </location>
</feature>
<feature type="modified residue" description="4-hydroxyproline" evidence="3">
    <location>
        <position position="772"/>
    </location>
</feature>
<feature type="modified residue" description="4-hydroxyproline" evidence="3">
    <location>
        <position position="781"/>
    </location>
</feature>
<feature type="modified residue" description="4-hydroxyproline" evidence="3">
    <location>
        <position position="784"/>
    </location>
</feature>
<feature type="modified residue" description="4-hydroxyproline" evidence="3">
    <location>
        <position position="790"/>
    </location>
</feature>
<feature type="modified residue" description="4-hydroxyproline" evidence="3">
    <location>
        <position position="805"/>
    </location>
</feature>
<feature type="modified residue" description="4-hydroxyproline" evidence="3">
    <location>
        <position position="811"/>
    </location>
</feature>
<feature type="modified residue" description="4-hydroxyproline" evidence="3">
    <location>
        <position position="817"/>
    </location>
</feature>
<feature type="modified residue" description="4-hydroxyproline" evidence="3">
    <location>
        <position position="826"/>
    </location>
</feature>
<feature type="modified residue" description="4-hydroxyproline" evidence="3">
    <location>
        <position position="832"/>
    </location>
</feature>
<feature type="modified residue" description="5-hydroxylysine" evidence="3">
    <location>
        <position position="841"/>
    </location>
</feature>
<feature type="modified residue" description="4-hydroxyproline" evidence="3">
    <location>
        <position position="852"/>
    </location>
</feature>
<feature type="modified residue" description="4-hydroxyproline" evidence="3">
    <location>
        <position position="855"/>
    </location>
</feature>
<feature type="modified residue" description="4-hydroxyproline" evidence="3">
    <location>
        <position position="858"/>
    </location>
</feature>
<feature type="modified residue" description="5-hydroxylysine" evidence="3">
    <location>
        <position position="903"/>
    </location>
</feature>
<feature type="modified residue" description="5-hydroxylysine; alternate" evidence="3">
    <location>
        <position position="915"/>
    </location>
</feature>
<feature type="modified residue" description="4-hydroxyproline" evidence="3">
    <location>
        <position position="930"/>
    </location>
</feature>
<feature type="modified residue" description="4-hydroxyproline" evidence="3">
    <location>
        <position position="933"/>
    </location>
</feature>
<feature type="modified residue" description="4-hydroxyproline" evidence="3">
    <location>
        <position position="951"/>
    </location>
</feature>
<feature type="modified residue" description="4-hydroxyproline" evidence="4">
    <location>
        <position position="966"/>
    </location>
</feature>
<feature type="modified residue" description="3-hydroxyproline" evidence="4">
    <location>
        <position position="971"/>
    </location>
</feature>
<feature type="modified residue" description="4-hydroxyproline" evidence="4">
    <location>
        <position position="972"/>
    </location>
</feature>
<feature type="modified residue" description="3-hydroxyproline" evidence="4">
    <location>
        <position position="986"/>
    </location>
</feature>
<feature type="modified residue" description="4-hydroxyproline" evidence="4">
    <location>
        <position position="987"/>
    </location>
</feature>
<feature type="modified residue" description="3-hydroxyproline" evidence="4">
    <location>
        <position position="989"/>
    </location>
</feature>
<feature type="modified residue" description="4-hydroxyproline" evidence="4">
    <location>
        <position position="990"/>
    </location>
</feature>
<feature type="modified residue" description="3-hydroxyproline" evidence="4">
    <location>
        <position position="992"/>
    </location>
</feature>
<feature type="modified residue" description="4-hydroxyproline" evidence="4">
    <location>
        <position position="993"/>
    </location>
</feature>
<feature type="modified residue" description="4-hydroxyproline" evidence="4">
    <location>
        <position position="996"/>
    </location>
</feature>
<feature type="modified residue" description="4-hydroxyproline" evidence="4">
    <location>
        <position position="999"/>
    </location>
</feature>
<feature type="glycosylation site" description="O-linked (Gal...) hydroxylysine; alternate" evidence="1">
    <location>
        <position position="101"/>
    </location>
</feature>
<feature type="glycosylation site" description="O-linked (Gal...) hydroxylysine; alternate" evidence="3">
    <location>
        <position position="915"/>
    </location>
</feature>
<feature type="unsure residue" description="I or L" evidence="6">
    <location>
        <position position="12"/>
    </location>
</feature>
<feature type="unsure residue" description="L or I" evidence="6">
    <location>
        <position position="26"/>
    </location>
</feature>
<feature type="unsure residue" description="L or I" evidence="6">
    <location>
        <position position="91"/>
    </location>
</feature>
<feature type="unsure residue" description="L or I" evidence="6">
    <location>
        <position position="97"/>
    </location>
</feature>
<feature type="unsure residue" description="L or I" evidence="6">
    <location>
        <position position="109"/>
    </location>
</feature>
<feature type="unsure residue" description="L or I" evidence="6">
    <location>
        <position position="142"/>
    </location>
</feature>
<feature type="unsure residue" description="I or L" evidence="6">
    <location>
        <position position="241"/>
    </location>
</feature>
<feature type="unsure residue" description="I or L" evidence="6">
    <location>
        <position position="292"/>
    </location>
</feature>
<feature type="unsure residue" description="L or I" evidence="6">
    <location>
        <position position="316"/>
    </location>
</feature>
<feature type="unsure residue" description="L or I" evidence="6">
    <location>
        <position position="370"/>
    </location>
</feature>
<feature type="unsure residue" description="L or I" evidence="6">
    <location>
        <position position="376"/>
    </location>
</feature>
<feature type="unsure residue" description="L or I" evidence="6">
    <location>
        <position position="473"/>
    </location>
</feature>
<feature type="unsure residue" description="L or I" evidence="6">
    <location>
        <position position="495"/>
    </location>
</feature>
<feature type="unsure residue" description="L or I" evidence="6">
    <location>
        <position position="534"/>
    </location>
</feature>
<feature type="unsure residue" description="L or I" evidence="6">
    <location>
        <position position="546"/>
    </location>
</feature>
<feature type="unsure residue" description="L or I" evidence="6">
    <location>
        <position position="573"/>
    </location>
</feature>
<feature type="unsure residue" description="I or L" evidence="6">
    <location>
        <position position="577"/>
    </location>
</feature>
<feature type="unsure residue" description="I or L" evidence="6">
    <location>
        <position position="661"/>
    </location>
</feature>
<feature type="unsure residue" description="I or L" evidence="6">
    <location>
        <position position="762"/>
    </location>
</feature>
<feature type="unsure residue" description="L or I" evidence="6">
    <location>
        <position position="771"/>
    </location>
</feature>
<feature type="unsure residue" description="L or I" evidence="6">
    <location>
        <position position="783"/>
    </location>
</feature>
<feature type="unsure residue" description="L or I" evidence="6">
    <location>
        <position position="813"/>
    </location>
</feature>
<feature type="unsure residue" description="I or L" evidence="6">
    <location>
        <position position="914"/>
    </location>
</feature>
<feature type="unsure residue" description="L or I" evidence="6">
    <location>
        <position position="923"/>
    </location>
</feature>
<feature type="unsure residue" description="L or I" evidence="6">
    <location>
        <position position="962"/>
    </location>
</feature>
<feature type="unsure residue" description="L or I" evidence="6">
    <location>
        <position position="965"/>
    </location>
</feature>
<feature type="unsure residue" description="I or L" evidence="6">
    <location>
        <position position="969"/>
    </location>
</feature>
<feature type="non-consecutive residues" evidence="7">
    <location>
        <begin position="49"/>
        <end position="50"/>
    </location>
</feature>
<feature type="non-consecutive residues" evidence="7">
    <location>
        <begin position="424"/>
        <end position="425"/>
    </location>
</feature>
<feature type="non-consecutive residues" evidence="7">
    <location>
        <begin position="504"/>
        <end position="505"/>
    </location>
</feature>
<feature type="non-consecutive residues" evidence="7">
    <location>
        <begin position="517"/>
        <end position="518"/>
    </location>
</feature>
<feature type="non-consecutive residues" evidence="7">
    <location>
        <begin position="849"/>
        <end position="850"/>
    </location>
</feature>
<feature type="non-terminal residue" evidence="6">
    <location>
        <position position="1"/>
    </location>
</feature>
<feature type="non-terminal residue" evidence="6">
    <location>
        <position position="999"/>
    </location>
</feature>